<accession>Q54N38</accession>
<keyword id="KW-0963">Cytoplasm</keyword>
<keyword id="KW-0378">Hydrolase</keyword>
<keyword id="KW-0539">Nucleus</keyword>
<keyword id="KW-0645">Protease</keyword>
<keyword id="KW-0647">Proteasome</keyword>
<keyword id="KW-1185">Reference proteome</keyword>
<keyword id="KW-0788">Thiol protease</keyword>
<keyword id="KW-0833">Ubl conjugation pathway</keyword>
<proteinExistence type="inferred from homology"/>
<reference key="1">
    <citation type="journal article" date="2005" name="Nature">
        <title>The genome of the social amoeba Dictyostelium discoideum.</title>
        <authorList>
            <person name="Eichinger L."/>
            <person name="Pachebat J.A."/>
            <person name="Gloeckner G."/>
            <person name="Rajandream M.A."/>
            <person name="Sucgang R."/>
            <person name="Berriman M."/>
            <person name="Song J."/>
            <person name="Olsen R."/>
            <person name="Szafranski K."/>
            <person name="Xu Q."/>
            <person name="Tunggal B."/>
            <person name="Kummerfeld S."/>
            <person name="Madera M."/>
            <person name="Konfortov B.A."/>
            <person name="Rivero F."/>
            <person name="Bankier A.T."/>
            <person name="Lehmann R."/>
            <person name="Hamlin N."/>
            <person name="Davies R."/>
            <person name="Gaudet P."/>
            <person name="Fey P."/>
            <person name="Pilcher K."/>
            <person name="Chen G."/>
            <person name="Saunders D."/>
            <person name="Sodergren E.J."/>
            <person name="Davis P."/>
            <person name="Kerhornou A."/>
            <person name="Nie X."/>
            <person name="Hall N."/>
            <person name="Anjard C."/>
            <person name="Hemphill L."/>
            <person name="Bason N."/>
            <person name="Farbrother P."/>
            <person name="Desany B."/>
            <person name="Just E."/>
            <person name="Morio T."/>
            <person name="Rost R."/>
            <person name="Churcher C.M."/>
            <person name="Cooper J."/>
            <person name="Haydock S."/>
            <person name="van Driessche N."/>
            <person name="Cronin A."/>
            <person name="Goodhead I."/>
            <person name="Muzny D.M."/>
            <person name="Mourier T."/>
            <person name="Pain A."/>
            <person name="Lu M."/>
            <person name="Harper D."/>
            <person name="Lindsay R."/>
            <person name="Hauser H."/>
            <person name="James K.D."/>
            <person name="Quiles M."/>
            <person name="Madan Babu M."/>
            <person name="Saito T."/>
            <person name="Buchrieser C."/>
            <person name="Wardroper A."/>
            <person name="Felder M."/>
            <person name="Thangavelu M."/>
            <person name="Johnson D."/>
            <person name="Knights A."/>
            <person name="Loulseged H."/>
            <person name="Mungall K.L."/>
            <person name="Oliver K."/>
            <person name="Price C."/>
            <person name="Quail M.A."/>
            <person name="Urushihara H."/>
            <person name="Hernandez J."/>
            <person name="Rabbinowitsch E."/>
            <person name="Steffen D."/>
            <person name="Sanders M."/>
            <person name="Ma J."/>
            <person name="Kohara Y."/>
            <person name="Sharp S."/>
            <person name="Simmonds M.N."/>
            <person name="Spiegler S."/>
            <person name="Tivey A."/>
            <person name="Sugano S."/>
            <person name="White B."/>
            <person name="Walker D."/>
            <person name="Woodward J.R."/>
            <person name="Winckler T."/>
            <person name="Tanaka Y."/>
            <person name="Shaulsky G."/>
            <person name="Schleicher M."/>
            <person name="Weinstock G.M."/>
            <person name="Rosenthal A."/>
            <person name="Cox E.C."/>
            <person name="Chisholm R.L."/>
            <person name="Gibbs R.A."/>
            <person name="Loomis W.F."/>
            <person name="Platzer M."/>
            <person name="Kay R.R."/>
            <person name="Williams J.G."/>
            <person name="Dear P.H."/>
            <person name="Noegel A.A."/>
            <person name="Barrell B.G."/>
            <person name="Kuspa A."/>
        </authorList>
    </citation>
    <scope>NUCLEOTIDE SEQUENCE [LARGE SCALE GENOMIC DNA]</scope>
    <source>
        <strain>AX4</strain>
    </source>
</reference>
<name>UCHL5_DICDI</name>
<organism>
    <name type="scientific">Dictyostelium discoideum</name>
    <name type="common">Social amoeba</name>
    <dbReference type="NCBI Taxonomy" id="44689"/>
    <lineage>
        <taxon>Eukaryota</taxon>
        <taxon>Amoebozoa</taxon>
        <taxon>Evosea</taxon>
        <taxon>Eumycetozoa</taxon>
        <taxon>Dictyostelia</taxon>
        <taxon>Dictyosteliales</taxon>
        <taxon>Dictyosteliaceae</taxon>
        <taxon>Dictyostelium</taxon>
    </lineage>
</organism>
<sequence length="343" mass="39325">MSENEGWCTIESDPGVFTELITKIGVKDIQVEELYTLDSSEYDRLKPVLGLIFLFKWEKEEENRTISDNENIFFANQVIQNACATQAILSVLLNSEGIELGEELSNFKSFVGDFPPMMKGEAIGNSELIKETHNSFTVQDPFIFSKKKNRKPSDAFHFISFIPFQGKVYELDGLKKGPYCLGDCTPDNWLEIATPFIQKRMEKYSQGEIRFNLMAVIKNRQTTLQEKILTLEKKKNDLEIKLSELNSGSGGDNKEESGGATPTTKEDLNFMINVVNNDIEEANNEILMEQEKFRNWKDENIRRKHNFTPLILNLIKGLAEKDNLQPLIQKAKDQISQKQQQHK</sequence>
<feature type="chain" id="PRO_0000331127" description="Ubiquitin carboxyl-terminal hydrolase isozyme L5">
    <location>
        <begin position="1"/>
        <end position="343"/>
    </location>
</feature>
<feature type="domain" description="UCH catalytic" evidence="2">
    <location>
        <begin position="6"/>
        <end position="218"/>
    </location>
</feature>
<feature type="domain" description="ULD" evidence="3">
    <location>
        <begin position="306"/>
        <end position="334"/>
    </location>
</feature>
<feature type="region of interest" description="Disordered" evidence="4">
    <location>
        <begin position="242"/>
        <end position="266"/>
    </location>
</feature>
<feature type="active site" description="Nucleophile" evidence="2">
    <location>
        <position position="83"/>
    </location>
</feature>
<feature type="active site" description="Proton donor" evidence="2">
    <location>
        <position position="157"/>
    </location>
</feature>
<feature type="site" description="Transition state stabilizer" evidence="2">
    <location>
        <position position="77"/>
    </location>
</feature>
<feature type="site" description="Important for enzyme activity" evidence="2">
    <location>
        <position position="172"/>
    </location>
</feature>
<evidence type="ECO:0000250" key="1"/>
<evidence type="ECO:0000255" key="2">
    <source>
        <dbReference type="PROSITE-ProRule" id="PRU01393"/>
    </source>
</evidence>
<evidence type="ECO:0000255" key="3">
    <source>
        <dbReference type="PROSITE-ProRule" id="PRU01394"/>
    </source>
</evidence>
<evidence type="ECO:0000256" key="4">
    <source>
        <dbReference type="SAM" id="MobiDB-lite"/>
    </source>
</evidence>
<evidence type="ECO:0000305" key="5"/>
<protein>
    <recommendedName>
        <fullName>Ubiquitin carboxyl-terminal hydrolase isozyme L5</fullName>
        <shortName>UCH-L5</shortName>
        <ecNumber>3.4.19.12</ecNumber>
    </recommendedName>
    <alternativeName>
        <fullName>Ubiquitin thioesterase L5</fullName>
    </alternativeName>
</protein>
<dbReference type="EC" id="3.4.19.12"/>
<dbReference type="EMBL" id="AAFI02000079">
    <property type="protein sequence ID" value="EAL64601.1"/>
    <property type="molecule type" value="Genomic_DNA"/>
</dbReference>
<dbReference type="RefSeq" id="XP_638105.1">
    <property type="nucleotide sequence ID" value="XM_633013.1"/>
</dbReference>
<dbReference type="SMR" id="Q54N38"/>
<dbReference type="FunCoup" id="Q54N38">
    <property type="interactions" value="1060"/>
</dbReference>
<dbReference type="STRING" id="44689.Q54N38"/>
<dbReference type="MEROPS" id="C12.005"/>
<dbReference type="PaxDb" id="44689-DDB0233072"/>
<dbReference type="EnsemblProtists" id="EAL64601">
    <property type="protein sequence ID" value="EAL64601"/>
    <property type="gene ID" value="DDB_G0285527"/>
</dbReference>
<dbReference type="GeneID" id="8625153"/>
<dbReference type="KEGG" id="ddi:DDB_G0285527"/>
<dbReference type="dictyBase" id="DDB_G0285527">
    <property type="gene designation" value="uch2"/>
</dbReference>
<dbReference type="VEuPathDB" id="AmoebaDB:DDB_G0285527"/>
<dbReference type="eggNOG" id="KOG2778">
    <property type="taxonomic scope" value="Eukaryota"/>
</dbReference>
<dbReference type="HOGENOM" id="CLU_018316_0_1_1"/>
<dbReference type="InParanoid" id="Q54N38"/>
<dbReference type="OMA" id="YIQYEIQ"/>
<dbReference type="PhylomeDB" id="Q54N38"/>
<dbReference type="Reactome" id="R-DDI-5689603">
    <property type="pathway name" value="UCH proteinases"/>
</dbReference>
<dbReference type="PRO" id="PR:Q54N38"/>
<dbReference type="Proteomes" id="UP000002195">
    <property type="component" value="Chromosome 4"/>
</dbReference>
<dbReference type="GO" id="GO:0005737">
    <property type="term" value="C:cytoplasm"/>
    <property type="evidence" value="ECO:0000318"/>
    <property type="project" value="GO_Central"/>
</dbReference>
<dbReference type="GO" id="GO:0005634">
    <property type="term" value="C:nucleus"/>
    <property type="evidence" value="ECO:0007669"/>
    <property type="project" value="UniProtKB-SubCell"/>
</dbReference>
<dbReference type="GO" id="GO:0000502">
    <property type="term" value="C:proteasome complex"/>
    <property type="evidence" value="ECO:0007669"/>
    <property type="project" value="UniProtKB-KW"/>
</dbReference>
<dbReference type="GO" id="GO:0004843">
    <property type="term" value="F:cysteine-type deubiquitinase activity"/>
    <property type="evidence" value="ECO:0000318"/>
    <property type="project" value="GO_Central"/>
</dbReference>
<dbReference type="GO" id="GO:0016579">
    <property type="term" value="P:protein deubiquitination"/>
    <property type="evidence" value="ECO:0007669"/>
    <property type="project" value="InterPro"/>
</dbReference>
<dbReference type="GO" id="GO:0006511">
    <property type="term" value="P:ubiquitin-dependent protein catabolic process"/>
    <property type="evidence" value="ECO:0007669"/>
    <property type="project" value="InterPro"/>
</dbReference>
<dbReference type="CDD" id="cd09617">
    <property type="entry name" value="Peptidase_C12_UCH37_BAP1"/>
    <property type="match status" value="1"/>
</dbReference>
<dbReference type="FunFam" id="3.40.532.10:FF:000016">
    <property type="entry name" value="Ubiquitin carboxyl-terminal hydrolase"/>
    <property type="match status" value="1"/>
</dbReference>
<dbReference type="FunFam" id="1.20.58.860:FF:000017">
    <property type="entry name" value="Ubiquitin carboxyl-terminal hydrolase isozyme L5"/>
    <property type="match status" value="1"/>
</dbReference>
<dbReference type="Gene3D" id="1.20.58.860">
    <property type="match status" value="1"/>
</dbReference>
<dbReference type="Gene3D" id="3.40.532.10">
    <property type="entry name" value="Peptidase C12, ubiquitin carboxyl-terminal hydrolase"/>
    <property type="match status" value="1"/>
</dbReference>
<dbReference type="InterPro" id="IPR038765">
    <property type="entry name" value="Papain-like_cys_pep_sf"/>
</dbReference>
<dbReference type="InterPro" id="IPR001578">
    <property type="entry name" value="Peptidase_C12_UCH"/>
</dbReference>
<dbReference type="InterPro" id="IPR036959">
    <property type="entry name" value="Peptidase_C12_UCH_sf"/>
</dbReference>
<dbReference type="InterPro" id="IPR017390">
    <property type="entry name" value="Ubiquitinyl_hydrolase_UCH37"/>
</dbReference>
<dbReference type="InterPro" id="IPR041507">
    <property type="entry name" value="UCH_C"/>
</dbReference>
<dbReference type="PANTHER" id="PTHR10589">
    <property type="entry name" value="UBIQUITIN CARBOXYL-TERMINAL HYDROLASE"/>
    <property type="match status" value="1"/>
</dbReference>
<dbReference type="PANTHER" id="PTHR10589:SF16">
    <property type="entry name" value="UBIQUITIN CARBOXYL-TERMINAL HYDROLASE ISOZYME L5"/>
    <property type="match status" value="1"/>
</dbReference>
<dbReference type="Pfam" id="PF01088">
    <property type="entry name" value="Peptidase_C12"/>
    <property type="match status" value="1"/>
</dbReference>
<dbReference type="Pfam" id="PF18031">
    <property type="entry name" value="UCH_C"/>
    <property type="match status" value="1"/>
</dbReference>
<dbReference type="PIRSF" id="PIRSF038120">
    <property type="entry name" value="Ubiquitinyl_hydrolase_UCH37"/>
    <property type="match status" value="1"/>
</dbReference>
<dbReference type="PRINTS" id="PR00707">
    <property type="entry name" value="UBCTHYDRLASE"/>
</dbReference>
<dbReference type="SUPFAM" id="SSF54001">
    <property type="entry name" value="Cysteine proteinases"/>
    <property type="match status" value="1"/>
</dbReference>
<dbReference type="PROSITE" id="PS52048">
    <property type="entry name" value="UCH_DOMAIN"/>
    <property type="match status" value="1"/>
</dbReference>
<dbReference type="PROSITE" id="PS52049">
    <property type="entry name" value="ULD"/>
    <property type="match status" value="1"/>
</dbReference>
<comment type="function">
    <text evidence="1">Protease that specifically cleaves 'Lys-48'-linked polyubiquitin chains. Deubiquitinating enzyme associated with the 19S regulatory subunit of the 26S proteasome (By similarity).</text>
</comment>
<comment type="catalytic activity">
    <reaction>
        <text>Thiol-dependent hydrolysis of ester, thioester, amide, peptide and isopeptide bonds formed by the C-terminal Gly of ubiquitin (a 76-residue protein attached to proteins as an intracellular targeting signal).</text>
        <dbReference type="EC" id="3.4.19.12"/>
    </reaction>
</comment>
<comment type="subunit">
    <text evidence="1">Component of the 19S (PA700) regulatory complex of the 26S proteasome.</text>
</comment>
<comment type="subcellular location">
    <subcellularLocation>
        <location evidence="1">Cytoplasm</location>
    </subcellularLocation>
    <subcellularLocation>
        <location evidence="1">Nucleus</location>
    </subcellularLocation>
</comment>
<comment type="similarity">
    <text evidence="5">Belongs to the peptidase C12 family.</text>
</comment>
<gene>
    <name type="primary">uch2</name>
    <name type="synonym">uchl5</name>
    <name type="ORF">DDB_G0285527</name>
</gene>